<name>OBP_PHOSU</name>
<keyword id="KW-0020">Allergen</keyword>
<keyword id="KW-0903">Direct protein sequencing</keyword>
<keyword id="KW-1015">Disulfide bond</keyword>
<keyword id="KW-0964">Secreted</keyword>
<accession>S5ZYD3</accession>
<reference evidence="8" key="1">
    <citation type="journal article" date="2014" name="J. Biol. Chem.">
        <title>Molecular and Immunological Characterization of the First Allergenic Lipocalin in Hamster: THE MAJOR ALLERGEN FROM SIBERIAN HAMSTER (PHODOPUS SUNGORUS).</title>
        <authorList>
            <person name="Torres J.A."/>
            <person name="de Las Heras M."/>
            <person name="Maroto A.S."/>
            <person name="Vivanco F."/>
            <person name="Sastre J."/>
            <person name="Pastor-Vargas C."/>
        </authorList>
    </citation>
    <scope>NUCLEOTIDE SEQUENCE [MRNA]</scope>
    <scope>SUBCELLULAR LOCATION</scope>
    <scope>TISSUE SPECIFICITY</scope>
    <scope>ALLERGEN</scope>
    <source>
        <tissue evidence="8">Salivary gland</tissue>
    </source>
</reference>
<reference key="2">
    <citation type="journal article" date="2012" name="Int. Arch. Allergy Immunol.">
        <title>An odorant-binding protein as a new allergen from Siberian hamster (Phodopus sungorus).</title>
        <authorList>
            <person name="Torres J.A."/>
            <person name="Pastor-Vargas C."/>
            <person name="de las Heras M."/>
            <person name="Vivanco F."/>
            <person name="Cuesta J."/>
            <person name="Sastre J."/>
        </authorList>
    </citation>
    <scope>PROTEIN SEQUENCE OF 1-8; 82-97 AND 102-114</scope>
    <scope>IDENTIFICATION BY MASS SPECTROMETRY</scope>
    <scope>SUBCELLULAR LOCATION</scope>
    <scope>TISSUE SPECIFICITY</scope>
    <scope>ALLERGEN</scope>
</reference>
<protein>
    <recommendedName>
        <fullName evidence="5">Odorant-binding protein</fullName>
    </recommendedName>
    <alternativeName>
        <fullName evidence="6">Lipocalin</fullName>
    </alternativeName>
    <allergenName evidence="7">Phod s 1.0101</allergenName>
</protein>
<sequence length="151" mass="17168">NDYAELEGKWDTIAIAADNDAKIKEEGPLRLYVRELYCNEDCSEMEVTFYVNANNQCSKTTVIGYKQADGTYRTQFEGDNRFQPVYATPENIVFTSKNVDRAGQETNLIFVVGKSQPLTPEQHEKLVEFAHENNIPEENIHNVLATDTCPK</sequence>
<gene>
    <name evidence="7" type="primary">OBP</name>
</gene>
<comment type="function">
    <text evidence="7">May act as a pheromone.</text>
</comment>
<comment type="subcellular location">
    <subcellularLocation>
        <location evidence="3 4">Secreted</location>
    </subcellularLocation>
</comment>
<comment type="tissue specificity">
    <text evidence="3 4">Expressed in salivary glands, hair and urine.</text>
</comment>
<comment type="allergen">
    <text evidence="3 4">Causes an allergic reaction in human (PubMed:21912180, PubMed:24993820). Binds to IgE in a patient bitten by Siberian hamster (PubMed:21912180). Binds to IgE in 100% of the 13 patients tested allergic to Siberian hamster. Causes degranulation of basophils (PubMed:24993820).</text>
</comment>
<comment type="similarity">
    <text evidence="2 7">Belongs to the calycin superfamily. Lipocalin family.</text>
</comment>
<proteinExistence type="evidence at protein level"/>
<dbReference type="EMBL" id="KF148615">
    <property type="protein sequence ID" value="AGT28425.1"/>
    <property type="molecule type" value="mRNA"/>
</dbReference>
<dbReference type="SMR" id="S5ZYD3"/>
<dbReference type="Allergome" id="11963">
    <property type="allergen name" value="Phod s 1.0101"/>
</dbReference>
<dbReference type="Allergome" id="845">
    <property type="allergen name" value="Phod s 1"/>
</dbReference>
<dbReference type="GO" id="GO:0005615">
    <property type="term" value="C:extracellular space"/>
    <property type="evidence" value="ECO:0000314"/>
    <property type="project" value="UniProtKB"/>
</dbReference>
<dbReference type="GO" id="GO:0005549">
    <property type="term" value="F:odorant binding"/>
    <property type="evidence" value="ECO:0007669"/>
    <property type="project" value="TreeGrafter"/>
</dbReference>
<dbReference type="GO" id="GO:0036094">
    <property type="term" value="F:small molecule binding"/>
    <property type="evidence" value="ECO:0007669"/>
    <property type="project" value="InterPro"/>
</dbReference>
<dbReference type="CDD" id="cd19427">
    <property type="entry name" value="lipocalin_OBP-like"/>
    <property type="match status" value="1"/>
</dbReference>
<dbReference type="FunFam" id="2.40.128.20:FF:000008">
    <property type="entry name" value="Major urinary protein"/>
    <property type="match status" value="1"/>
</dbReference>
<dbReference type="Gene3D" id="2.40.128.20">
    <property type="match status" value="1"/>
</dbReference>
<dbReference type="InterPro" id="IPR012674">
    <property type="entry name" value="Calycin"/>
</dbReference>
<dbReference type="InterPro" id="IPR002345">
    <property type="entry name" value="Lipocalin"/>
</dbReference>
<dbReference type="InterPro" id="IPR000566">
    <property type="entry name" value="Lipocln_cytosolic_FA-bd_dom"/>
</dbReference>
<dbReference type="InterPro" id="IPR002448">
    <property type="entry name" value="OBP-like"/>
</dbReference>
<dbReference type="PANTHER" id="PTHR11430">
    <property type="entry name" value="LIPOCALIN"/>
    <property type="match status" value="1"/>
</dbReference>
<dbReference type="PANTHER" id="PTHR11430:SF65">
    <property type="entry name" value="ODORANT-BINDING PROTEIN 1A-RELATED"/>
    <property type="match status" value="1"/>
</dbReference>
<dbReference type="Pfam" id="PF00061">
    <property type="entry name" value="Lipocalin"/>
    <property type="match status" value="1"/>
</dbReference>
<dbReference type="PRINTS" id="PR01173">
    <property type="entry name" value="ODORANTBNDNG"/>
</dbReference>
<dbReference type="SUPFAM" id="SSF50814">
    <property type="entry name" value="Lipocalins"/>
    <property type="match status" value="1"/>
</dbReference>
<organism evidence="8">
    <name type="scientific">Phodopus sungorus</name>
    <name type="common">Striped hairy-footed hamster</name>
    <name type="synonym">Djungarian hamster</name>
    <dbReference type="NCBI Taxonomy" id="10044"/>
    <lineage>
        <taxon>Eukaryota</taxon>
        <taxon>Metazoa</taxon>
        <taxon>Chordata</taxon>
        <taxon>Craniata</taxon>
        <taxon>Vertebrata</taxon>
        <taxon>Euteleostomi</taxon>
        <taxon>Mammalia</taxon>
        <taxon>Eutheria</taxon>
        <taxon>Euarchontoglires</taxon>
        <taxon>Glires</taxon>
        <taxon>Rodentia</taxon>
        <taxon>Myomorpha</taxon>
        <taxon>Muroidea</taxon>
        <taxon>Cricetidae</taxon>
        <taxon>Cricetinae</taxon>
        <taxon>Phodopus</taxon>
    </lineage>
</organism>
<feature type="chain" id="PRO_0000447621" description="Odorant-binding protein">
    <location>
        <begin position="1" status="less than"/>
        <end position="151"/>
    </location>
</feature>
<feature type="disulfide bond" evidence="1">
    <location>
        <begin position="38"/>
        <end position="42"/>
    </location>
</feature>
<feature type="disulfide bond" evidence="1">
    <location>
        <begin position="57"/>
        <end position="149"/>
    </location>
</feature>
<feature type="sequence conflict" description="In Ref. 2; AA sequence." evidence="7" ref="2">
    <original>Q</original>
    <variation>K</variation>
    <location>
        <position position="83"/>
    </location>
</feature>
<feature type="sequence conflict" description="In Ref. 2; AA sequence." evidence="7" ref="2">
    <original>S</original>
    <variation>N</variation>
    <location>
        <position position="96"/>
    </location>
</feature>
<feature type="sequence conflict" description="In Ref. 2; AA sequence." evidence="7" ref="2">
    <original>LIF</original>
    <variation>EMY</variation>
    <location>
        <begin position="108"/>
        <end position="110"/>
    </location>
</feature>
<feature type="non-terminal residue" evidence="8">
    <location>
        <position position="1"/>
    </location>
</feature>
<evidence type="ECO:0000250" key="1">
    <source>
        <dbReference type="UniProtKB" id="P08937"/>
    </source>
</evidence>
<evidence type="ECO:0000255" key="2"/>
<evidence type="ECO:0000269" key="3">
    <source>
    </source>
</evidence>
<evidence type="ECO:0000269" key="4">
    <source>
    </source>
</evidence>
<evidence type="ECO:0000303" key="5">
    <source>
    </source>
</evidence>
<evidence type="ECO:0000303" key="6">
    <source>
    </source>
</evidence>
<evidence type="ECO:0000305" key="7"/>
<evidence type="ECO:0000312" key="8">
    <source>
        <dbReference type="EMBL" id="AGT28425.1"/>
    </source>
</evidence>